<protein>
    <recommendedName>
        <fullName evidence="6">Oleosin Ara h 14.0103</fullName>
    </recommendedName>
    <alternativeName>
        <fullName evidence="5 8">Oleosin 5</fullName>
    </alternativeName>
    <allergenName evidence="6">Ara h 14.0103</allergenName>
</protein>
<accession>Q6J1J8</accession>
<organism evidence="7">
    <name type="scientific">Arachis hypogaea</name>
    <name type="common">Peanut</name>
    <dbReference type="NCBI Taxonomy" id="3818"/>
    <lineage>
        <taxon>Eukaryota</taxon>
        <taxon>Viridiplantae</taxon>
        <taxon>Streptophyta</taxon>
        <taxon>Embryophyta</taxon>
        <taxon>Tracheophyta</taxon>
        <taxon>Spermatophyta</taxon>
        <taxon>Magnoliopsida</taxon>
        <taxon>eudicotyledons</taxon>
        <taxon>Gunneridae</taxon>
        <taxon>Pentapetalae</taxon>
        <taxon>rosids</taxon>
        <taxon>fabids</taxon>
        <taxon>Fabales</taxon>
        <taxon>Fabaceae</taxon>
        <taxon>Papilionoideae</taxon>
        <taxon>50 kb inversion clade</taxon>
        <taxon>dalbergioids sensu lato</taxon>
        <taxon>Dalbergieae</taxon>
        <taxon>Pterocarpus clade</taxon>
        <taxon>Arachis</taxon>
    </lineage>
</organism>
<proteinExistence type="evidence at protein level"/>
<gene>
    <name evidence="10" type="ORF">Ahy_A05g023475</name>
</gene>
<sequence length="176" mass="18448">MATATDRAPHQVQVHTPTTQRVDVPRRGYDVSGGGIKTLLPERGPSTSQIIAVLVGVPTGGTLLLLSGLSLLGTIIGLAIATPVFIFFSPVIVPAVVTIGLAVTGILTAGACGLTGLMSLSWMINFIRQVHGTTVPDQLDSVKRRMADMADYVGQKTKDAGQEIQTKAQDVKRSSS</sequence>
<evidence type="ECO:0000255" key="1"/>
<evidence type="ECO:0000255" key="2">
    <source>
        <dbReference type="RuleBase" id="RU000540"/>
    </source>
</evidence>
<evidence type="ECO:0000256" key="3">
    <source>
        <dbReference type="SAM" id="MobiDB-lite"/>
    </source>
</evidence>
<evidence type="ECO:0000269" key="4">
    <source>
    </source>
</evidence>
<evidence type="ECO:0000303" key="5">
    <source>
    </source>
</evidence>
<evidence type="ECO:0000305" key="6"/>
<evidence type="ECO:0000312" key="7">
    <source>
        <dbReference type="EMBL" id="AAT11925.1"/>
    </source>
</evidence>
<evidence type="ECO:0000312" key="8">
    <source>
        <dbReference type="EMBL" id="ABC96763.1"/>
    </source>
</evidence>
<evidence type="ECO:0000312" key="9">
    <source>
        <dbReference type="EMBL" id="ABS28871.1"/>
    </source>
</evidence>
<evidence type="ECO:0000312" key="10">
    <source>
        <dbReference type="EMBL" id="RYR57768.1"/>
    </source>
</evidence>
<evidence type="ECO:0000312" key="11">
    <source>
        <dbReference type="Proteomes" id="UP000289738"/>
    </source>
</evidence>
<comment type="function">
    <text evidence="6">May have a structural role to stabilize the lipid body during desiccation of the seed by preventing coalescence of the oil. Probably interacts with both lipid and phospholipid moieties of lipid bodies. May also provide recognition signals for specific lipase anchorage in lipolysis during seedling growth.</text>
</comment>
<comment type="subcellular location">
    <subcellularLocation>
        <location evidence="2 4">Lipid droplet</location>
    </subcellularLocation>
    <subcellularLocation>
        <location evidence="2">Membrane</location>
        <topology evidence="2">Multi-pass membrane protein</topology>
    </subcellularLocation>
    <text evidence="6">Surface of oil bodies. Oleosins exist at a monolayer lipid/water interface.</text>
</comment>
<comment type="tissue specificity">
    <text evidence="4">Expressed in seeds (at protein level).</text>
</comment>
<comment type="allergen">
    <text evidence="4">Causes an allergic reaction in human. Pooled with Ara h 15 binds to IgE in 75% of the 4 peanut-allergic patients tested.</text>
</comment>
<comment type="similarity">
    <text evidence="2">Belongs to the oleosin family.</text>
</comment>
<dbReference type="EMBL" id="AY605694">
    <property type="protein sequence ID" value="AAT11925.1"/>
    <property type="molecule type" value="Genomic_DNA"/>
</dbReference>
<dbReference type="EMBL" id="DQ368496">
    <property type="protein sequence ID" value="ABC96763.1"/>
    <property type="molecule type" value="mRNA"/>
</dbReference>
<dbReference type="EMBL" id="EF695401">
    <property type="protein sequence ID" value="ABS28871.1"/>
    <property type="molecule type" value="Genomic_DNA"/>
</dbReference>
<dbReference type="EMBL" id="SDMP01000005">
    <property type="protein sequence ID" value="RYR57768.1"/>
    <property type="molecule type" value="Genomic_DNA"/>
</dbReference>
<dbReference type="SMR" id="Q6J1J8"/>
<dbReference type="STRING" id="3818.Q6J1J8"/>
<dbReference type="Allergome" id="11753">
    <property type="allergen name" value="Ara h 14"/>
</dbReference>
<dbReference type="Allergome" id="11756">
    <property type="allergen name" value="Ara h 14.0103"/>
</dbReference>
<dbReference type="iPTMnet" id="Q6J1J8"/>
<dbReference type="EnsemblPlants" id="arahy.Tifrunner.gnm2.ann2.Ah05g306700.1">
    <property type="protein sequence ID" value="arahy.Tifrunner.gnm2.ann2.Ah05g306700.1-CDS-1"/>
    <property type="gene ID" value="arahy.Tifrunner.gnm2.ann2.Ah05g306700"/>
</dbReference>
<dbReference type="Gramene" id="arahy.Tifrunner.gnm2.ann2.Ah05g306700.1">
    <property type="protein sequence ID" value="arahy.Tifrunner.gnm2.ann2.Ah05g306700.1-CDS-1"/>
    <property type="gene ID" value="arahy.Tifrunner.gnm2.ann2.Ah05g306700"/>
</dbReference>
<dbReference type="OrthoDB" id="1929188at2759"/>
<dbReference type="Proteomes" id="UP000289738">
    <property type="component" value="Chromosome A05"/>
</dbReference>
<dbReference type="GO" id="GO:0016020">
    <property type="term" value="C:membrane"/>
    <property type="evidence" value="ECO:0007669"/>
    <property type="project" value="UniProtKB-SubCell"/>
</dbReference>
<dbReference type="GO" id="GO:0012511">
    <property type="term" value="C:monolayer-surrounded lipid storage body"/>
    <property type="evidence" value="ECO:0007669"/>
    <property type="project" value="InterPro"/>
</dbReference>
<dbReference type="GO" id="GO:0019915">
    <property type="term" value="P:lipid storage"/>
    <property type="evidence" value="ECO:0007669"/>
    <property type="project" value="TreeGrafter"/>
</dbReference>
<dbReference type="GO" id="GO:0050826">
    <property type="term" value="P:response to freezing"/>
    <property type="evidence" value="ECO:0007669"/>
    <property type="project" value="TreeGrafter"/>
</dbReference>
<dbReference type="GO" id="GO:0010344">
    <property type="term" value="P:seed oilbody biogenesis"/>
    <property type="evidence" value="ECO:0007669"/>
    <property type="project" value="TreeGrafter"/>
</dbReference>
<dbReference type="InterPro" id="IPR000136">
    <property type="entry name" value="Oleosin"/>
</dbReference>
<dbReference type="PANTHER" id="PTHR33203">
    <property type="entry name" value="OLEOSIN"/>
    <property type="match status" value="1"/>
</dbReference>
<dbReference type="PANTHER" id="PTHR33203:SF63">
    <property type="entry name" value="OLEOSIN 18.2 KDA"/>
    <property type="match status" value="1"/>
</dbReference>
<dbReference type="Pfam" id="PF01277">
    <property type="entry name" value="Oleosin"/>
    <property type="match status" value="1"/>
</dbReference>
<dbReference type="PROSITE" id="PS00811">
    <property type="entry name" value="OLEOSINS"/>
    <property type="match status" value="1"/>
</dbReference>
<keyword id="KW-0007">Acetylation</keyword>
<keyword id="KW-0020">Allergen</keyword>
<keyword id="KW-0903">Direct protein sequencing</keyword>
<keyword id="KW-0551">Lipid droplet</keyword>
<keyword id="KW-0472">Membrane</keyword>
<keyword id="KW-1185">Reference proteome</keyword>
<keyword id="KW-0812">Transmembrane</keyword>
<keyword id="KW-1133">Transmembrane helix</keyword>
<name>OL143_ARAHY</name>
<reference evidence="7" key="1">
    <citation type="submission" date="2004-04" db="EMBL/GenBank/DDBJ databases">
        <title>Clinical characterization of a peanut oleosin isoform.</title>
        <authorList>
            <person name="Schocker F."/>
            <person name="Poeppelmann M."/>
            <person name="Becker W.M."/>
        </authorList>
    </citation>
    <scope>NUCLEOTIDE SEQUENCE [GENOMIC DNA]</scope>
</reference>
<reference evidence="8" key="2">
    <citation type="submission" date="2006-01" db="EMBL/GenBank/DDBJ databases">
        <title>Isolation of genes encoding peanut seed protein.</title>
        <authorList>
            <person name="Zhong Y.J."/>
            <person name="Yan Y.S."/>
            <person name="Wang L."/>
            <person name="Lin X.D."/>
            <person name="Zhang Y.S."/>
            <person name="Fu G.H."/>
            <person name="Huang S.Z."/>
        </authorList>
    </citation>
    <scope>NUCLEOTIDE SEQUENCE [MRNA]</scope>
</reference>
<reference evidence="9" key="3">
    <citation type="submission" date="2007-06" db="EMBL/GenBank/DDBJ databases">
        <title>Cloning and characterization of four genes encoding peanut seed oleosins.</title>
        <authorList>
            <person name="Li C."/>
            <person name="Fu G."/>
            <person name="Zhong Y."/>
            <person name="Yan Y."/>
            <person name="Wang L."/>
            <person name="Huang S."/>
        </authorList>
    </citation>
    <scope>NUCLEOTIDE SEQUENCE [GENOMIC DNA]</scope>
</reference>
<reference evidence="10 11" key="4">
    <citation type="submission" date="2019-01" db="EMBL/GenBank/DDBJ databases">
        <title>Sequencing of cultivated peanut Arachis hypogaea provides insights into genome evolution and oil improvement.</title>
        <authorList>
            <person name="Chen X."/>
        </authorList>
    </citation>
    <scope>NUCLEOTIDE SEQUENCE [LARGE SCALE GENOMIC DNA]</scope>
    <source>
        <strain evidence="11">cv. Fuhuasheng</strain>
        <tissue evidence="10">Leaf</tissue>
    </source>
</reference>
<reference key="5">
    <citation type="journal article" date="2015" name="PLoS ONE">
        <title>Development of a novel strategy to isolate lipophilic allergens (oleosins) from peanuts.</title>
        <authorList>
            <person name="Schwager C."/>
            <person name="Kull S."/>
            <person name="Krause S."/>
            <person name="Schocker F."/>
            <person name="Petersen A."/>
            <person name="Becker W.M."/>
            <person name="Jappe U."/>
        </authorList>
    </citation>
    <scope>PROTEIN SEQUENCE OF 2-21; 27-43; 129-143 AND 146-156</scope>
    <scope>SUBCELLULAR LOCATION</scope>
    <scope>TISSUE SPECIFICITY</scope>
    <scope>IDENTIFICATION BY MASS SPECTROMETRY</scope>
    <scope>ACETYLATION AT ALA-2</scope>
    <scope>ALLERGEN</scope>
    <source>
        <tissue evidence="5">Seed</tissue>
    </source>
</reference>
<feature type="initiator methionine" description="Removed" evidence="4">
    <location>
        <position position="1"/>
    </location>
</feature>
<feature type="chain" id="PRO_0000449845" description="Oleosin Ara h 14.0103">
    <location>
        <begin position="2"/>
        <end position="176"/>
    </location>
</feature>
<feature type="transmembrane region" description="Helical" evidence="1">
    <location>
        <begin position="50"/>
        <end position="70"/>
    </location>
</feature>
<feature type="transmembrane region" description="Helical" evidence="1">
    <location>
        <begin position="75"/>
        <end position="95"/>
    </location>
</feature>
<feature type="transmembrane region" description="Helical" evidence="1">
    <location>
        <begin position="96"/>
        <end position="116"/>
    </location>
</feature>
<feature type="region of interest" description="Disordered" evidence="3">
    <location>
        <begin position="156"/>
        <end position="176"/>
    </location>
</feature>
<feature type="modified residue" description="N-acetylalanine; alternate" evidence="4">
    <location>
        <position position="2"/>
    </location>
</feature>